<gene>
    <name evidence="1" type="primary">rpsR</name>
    <name type="ordered locus">AHA_0711</name>
</gene>
<dbReference type="EMBL" id="CP000462">
    <property type="protein sequence ID" value="ABK36830.1"/>
    <property type="molecule type" value="Genomic_DNA"/>
</dbReference>
<dbReference type="RefSeq" id="WP_005308890.1">
    <property type="nucleotide sequence ID" value="NC_008570.1"/>
</dbReference>
<dbReference type="RefSeq" id="YP_855253.1">
    <property type="nucleotide sequence ID" value="NC_008570.1"/>
</dbReference>
<dbReference type="SMR" id="A0KG68"/>
<dbReference type="STRING" id="380703.AHA_0711"/>
<dbReference type="EnsemblBacteria" id="ABK36830">
    <property type="protein sequence ID" value="ABK36830"/>
    <property type="gene ID" value="AHA_0711"/>
</dbReference>
<dbReference type="GeneID" id="92809250"/>
<dbReference type="KEGG" id="aha:AHA_0711"/>
<dbReference type="PATRIC" id="fig|380703.7.peg.713"/>
<dbReference type="eggNOG" id="COG0238">
    <property type="taxonomic scope" value="Bacteria"/>
</dbReference>
<dbReference type="HOGENOM" id="CLU_148710_2_2_6"/>
<dbReference type="OrthoDB" id="9812008at2"/>
<dbReference type="PRO" id="PR:A0KG68"/>
<dbReference type="Proteomes" id="UP000000756">
    <property type="component" value="Chromosome"/>
</dbReference>
<dbReference type="GO" id="GO:0022627">
    <property type="term" value="C:cytosolic small ribosomal subunit"/>
    <property type="evidence" value="ECO:0007669"/>
    <property type="project" value="TreeGrafter"/>
</dbReference>
<dbReference type="GO" id="GO:0070181">
    <property type="term" value="F:small ribosomal subunit rRNA binding"/>
    <property type="evidence" value="ECO:0007669"/>
    <property type="project" value="TreeGrafter"/>
</dbReference>
<dbReference type="GO" id="GO:0003735">
    <property type="term" value="F:structural constituent of ribosome"/>
    <property type="evidence" value="ECO:0007669"/>
    <property type="project" value="InterPro"/>
</dbReference>
<dbReference type="GO" id="GO:0006412">
    <property type="term" value="P:translation"/>
    <property type="evidence" value="ECO:0007669"/>
    <property type="project" value="UniProtKB-UniRule"/>
</dbReference>
<dbReference type="FunFam" id="4.10.640.10:FF:000001">
    <property type="entry name" value="30S ribosomal protein S18"/>
    <property type="match status" value="1"/>
</dbReference>
<dbReference type="Gene3D" id="4.10.640.10">
    <property type="entry name" value="Ribosomal protein S18"/>
    <property type="match status" value="1"/>
</dbReference>
<dbReference type="HAMAP" id="MF_00270">
    <property type="entry name" value="Ribosomal_bS18"/>
    <property type="match status" value="1"/>
</dbReference>
<dbReference type="InterPro" id="IPR001648">
    <property type="entry name" value="Ribosomal_bS18"/>
</dbReference>
<dbReference type="InterPro" id="IPR018275">
    <property type="entry name" value="Ribosomal_bS18_CS"/>
</dbReference>
<dbReference type="InterPro" id="IPR036870">
    <property type="entry name" value="Ribosomal_bS18_sf"/>
</dbReference>
<dbReference type="NCBIfam" id="TIGR00165">
    <property type="entry name" value="S18"/>
    <property type="match status" value="1"/>
</dbReference>
<dbReference type="PANTHER" id="PTHR13479">
    <property type="entry name" value="30S RIBOSOMAL PROTEIN S18"/>
    <property type="match status" value="1"/>
</dbReference>
<dbReference type="PANTHER" id="PTHR13479:SF40">
    <property type="entry name" value="SMALL RIBOSOMAL SUBUNIT PROTEIN BS18M"/>
    <property type="match status" value="1"/>
</dbReference>
<dbReference type="Pfam" id="PF01084">
    <property type="entry name" value="Ribosomal_S18"/>
    <property type="match status" value="1"/>
</dbReference>
<dbReference type="PRINTS" id="PR00974">
    <property type="entry name" value="RIBOSOMALS18"/>
</dbReference>
<dbReference type="SUPFAM" id="SSF46911">
    <property type="entry name" value="Ribosomal protein S18"/>
    <property type="match status" value="1"/>
</dbReference>
<dbReference type="PROSITE" id="PS00057">
    <property type="entry name" value="RIBOSOMAL_S18"/>
    <property type="match status" value="1"/>
</dbReference>
<sequence length="76" mass="9100">MARYFRRRKFCRFTAENVTEIDYKDIVTLKNYITESGKIVPSRITGTRAKYQRQLARAIKRARYLALLPYTDLHNK</sequence>
<accession>A0KG68</accession>
<protein>
    <recommendedName>
        <fullName evidence="1">Small ribosomal subunit protein bS18</fullName>
    </recommendedName>
    <alternativeName>
        <fullName evidence="2">30S ribosomal protein S18</fullName>
    </alternativeName>
</protein>
<evidence type="ECO:0000255" key="1">
    <source>
        <dbReference type="HAMAP-Rule" id="MF_00270"/>
    </source>
</evidence>
<evidence type="ECO:0000305" key="2"/>
<comment type="function">
    <text evidence="1">Binds as a heterodimer with protein bS6 to the central domain of the 16S rRNA, where it helps stabilize the platform of the 30S subunit.</text>
</comment>
<comment type="subunit">
    <text evidence="1">Part of the 30S ribosomal subunit. Forms a tight heterodimer with protein bS6.</text>
</comment>
<comment type="similarity">
    <text evidence="1">Belongs to the bacterial ribosomal protein bS18 family.</text>
</comment>
<reference key="1">
    <citation type="journal article" date="2006" name="J. Bacteriol.">
        <title>Genome sequence of Aeromonas hydrophila ATCC 7966T: jack of all trades.</title>
        <authorList>
            <person name="Seshadri R."/>
            <person name="Joseph S.W."/>
            <person name="Chopra A.K."/>
            <person name="Sha J."/>
            <person name="Shaw J."/>
            <person name="Graf J."/>
            <person name="Haft D.H."/>
            <person name="Wu M."/>
            <person name="Ren Q."/>
            <person name="Rosovitz M.J."/>
            <person name="Madupu R."/>
            <person name="Tallon L."/>
            <person name="Kim M."/>
            <person name="Jin S."/>
            <person name="Vuong H."/>
            <person name="Stine O.C."/>
            <person name="Ali A."/>
            <person name="Horneman A.J."/>
            <person name="Heidelberg J.F."/>
        </authorList>
    </citation>
    <scope>NUCLEOTIDE SEQUENCE [LARGE SCALE GENOMIC DNA]</scope>
    <source>
        <strain>ATCC 7966 / DSM 30187 / BCRC 13018 / CCUG 14551 / JCM 1027 / KCTC 2358 / NCIMB 9240 / NCTC 8049</strain>
    </source>
</reference>
<proteinExistence type="inferred from homology"/>
<organism>
    <name type="scientific">Aeromonas hydrophila subsp. hydrophila (strain ATCC 7966 / DSM 30187 / BCRC 13018 / CCUG 14551 / JCM 1027 / KCTC 2358 / NCIMB 9240 / NCTC 8049)</name>
    <dbReference type="NCBI Taxonomy" id="380703"/>
    <lineage>
        <taxon>Bacteria</taxon>
        <taxon>Pseudomonadati</taxon>
        <taxon>Pseudomonadota</taxon>
        <taxon>Gammaproteobacteria</taxon>
        <taxon>Aeromonadales</taxon>
        <taxon>Aeromonadaceae</taxon>
        <taxon>Aeromonas</taxon>
    </lineage>
</organism>
<feature type="chain" id="PRO_1000003436" description="Small ribosomal subunit protein bS18">
    <location>
        <begin position="1"/>
        <end position="76"/>
    </location>
</feature>
<name>RS18_AERHH</name>
<keyword id="KW-1185">Reference proteome</keyword>
<keyword id="KW-0687">Ribonucleoprotein</keyword>
<keyword id="KW-0689">Ribosomal protein</keyword>
<keyword id="KW-0694">RNA-binding</keyword>
<keyword id="KW-0699">rRNA-binding</keyword>